<proteinExistence type="evidence at transcript level"/>
<sequence length="159" mass="15709">MVLLISSEVSARDLTETTSDAKKEVVEKTNEVNDAKYGGGYNHGGGGYNGGGYNHGGGGYNNGGGYNHGGGGYNNGGGGYNHGGGGYNNGGGGYNHGGGGYNNGGGGYNHGGGGYNGGGYNHGGGGYNHGGGGCQYHCHGRCCSHAEFVAMQAKDNTQN</sequence>
<feature type="chain" id="PRO_0000083860" description="Abscisic acid and environmental stress-inducible protein">
    <location>
        <begin position="1"/>
        <end position="159"/>
    </location>
</feature>
<feature type="repeat" description="1">
    <location>
        <begin position="38"/>
        <end position="49"/>
    </location>
</feature>
<feature type="repeat" description="2">
    <location>
        <begin position="50"/>
        <end position="61"/>
    </location>
</feature>
<feature type="repeat" description="3">
    <location>
        <begin position="63"/>
        <end position="74"/>
    </location>
</feature>
<feature type="repeat" description="4">
    <location>
        <begin position="77"/>
        <end position="88"/>
    </location>
</feature>
<feature type="repeat" description="5">
    <location>
        <begin position="91"/>
        <end position="102"/>
    </location>
</feature>
<feature type="repeat" description="6">
    <location>
        <begin position="105"/>
        <end position="116"/>
    </location>
</feature>
<feature type="repeat" description="7; approximate">
    <location>
        <begin position="124"/>
        <end position="135"/>
    </location>
</feature>
<feature type="region of interest" description="7 X 12 AA repeats of G-G-G-Y-N-H-G-G-G-Y-N">
    <location>
        <begin position="38"/>
        <end position="135"/>
    </location>
</feature>
<dbReference type="EMBL" id="X59930">
    <property type="protein sequence ID" value="CAA42554.1"/>
    <property type="molecule type" value="mRNA"/>
</dbReference>
<dbReference type="PIR" id="S18345">
    <property type="entry name" value="S18345"/>
</dbReference>
<dbReference type="InterPro" id="IPR052872">
    <property type="entry name" value="ESR_Regulator"/>
</dbReference>
<dbReference type="InterPro" id="IPR010800">
    <property type="entry name" value="GRP"/>
</dbReference>
<dbReference type="PANTHER" id="PTHR37372:SF1">
    <property type="entry name" value="GEO07177P1"/>
    <property type="match status" value="1"/>
</dbReference>
<dbReference type="PANTHER" id="PTHR37372">
    <property type="entry name" value="OS06G0316800 PROTEIN"/>
    <property type="match status" value="1"/>
</dbReference>
<dbReference type="Pfam" id="PF07172">
    <property type="entry name" value="GRP"/>
    <property type="match status" value="1"/>
</dbReference>
<keyword id="KW-0677">Repeat</keyword>
<keyword id="KW-0346">Stress response</keyword>
<reference key="1">
    <citation type="journal article" date="1991" name="Plant Mol. Biol.">
        <title>Primary structure of an environmental stress and abscisic acid-inducible alfalfa protein.</title>
        <authorList>
            <person name="Luo M."/>
            <person name="Lin L."/>
            <person name="Hill R.D."/>
            <person name="Mohapatra S.S."/>
        </authorList>
    </citation>
    <scope>NUCLEOTIDE SEQUENCE [MRNA]</scope>
    <source>
        <strain>cv. Anik</strain>
        <tissue>Leaf</tissue>
    </source>
</reference>
<evidence type="ECO:0000305" key="1"/>
<name>GRPA_MEDSF</name>
<protein>
    <recommendedName>
        <fullName>Abscisic acid and environmental stress-inducible protein</fullName>
    </recommendedName>
</protein>
<comment type="developmental stage">
    <text>Seedling.</text>
</comment>
<comment type="induction">
    <text>By environmental stress and abscisic acid (ABA).</text>
</comment>
<comment type="similarity">
    <text evidence="1">Belongs to the GRP family.</text>
</comment>
<organism>
    <name type="scientific">Medicago sativa subsp. falcata</name>
    <name type="common">Sickle medic</name>
    <name type="synonym">Medicago falcata</name>
    <dbReference type="NCBI Taxonomy" id="3878"/>
    <lineage>
        <taxon>Eukaryota</taxon>
        <taxon>Viridiplantae</taxon>
        <taxon>Streptophyta</taxon>
        <taxon>Embryophyta</taxon>
        <taxon>Tracheophyta</taxon>
        <taxon>Spermatophyta</taxon>
        <taxon>Magnoliopsida</taxon>
        <taxon>eudicotyledons</taxon>
        <taxon>Gunneridae</taxon>
        <taxon>Pentapetalae</taxon>
        <taxon>rosids</taxon>
        <taxon>fabids</taxon>
        <taxon>Fabales</taxon>
        <taxon>Fabaceae</taxon>
        <taxon>Papilionoideae</taxon>
        <taxon>50 kb inversion clade</taxon>
        <taxon>NPAAA clade</taxon>
        <taxon>Hologalegina</taxon>
        <taxon>IRL clade</taxon>
        <taxon>Trifolieae</taxon>
        <taxon>Medicago</taxon>
    </lineage>
</organism>
<accession>Q09134</accession>